<gene>
    <name evidence="1" type="primary">lspA</name>
    <name type="ordered locus">SaurJH1_1280</name>
</gene>
<name>LSPA_STAA2</name>
<proteinExistence type="inferred from homology"/>
<dbReference type="EC" id="3.4.23.36" evidence="1"/>
<dbReference type="EMBL" id="CP000736">
    <property type="protein sequence ID" value="ABR52133.1"/>
    <property type="molecule type" value="Genomic_DNA"/>
</dbReference>
<dbReference type="SMR" id="A6U115"/>
<dbReference type="KEGG" id="sah:SaurJH1_1280"/>
<dbReference type="HOGENOM" id="CLU_083252_3_0_9"/>
<dbReference type="UniPathway" id="UPA00665"/>
<dbReference type="GO" id="GO:0005886">
    <property type="term" value="C:plasma membrane"/>
    <property type="evidence" value="ECO:0007669"/>
    <property type="project" value="UniProtKB-SubCell"/>
</dbReference>
<dbReference type="GO" id="GO:0004190">
    <property type="term" value="F:aspartic-type endopeptidase activity"/>
    <property type="evidence" value="ECO:0007669"/>
    <property type="project" value="UniProtKB-UniRule"/>
</dbReference>
<dbReference type="GO" id="GO:0006508">
    <property type="term" value="P:proteolysis"/>
    <property type="evidence" value="ECO:0007669"/>
    <property type="project" value="UniProtKB-KW"/>
</dbReference>
<dbReference type="HAMAP" id="MF_00161">
    <property type="entry name" value="LspA"/>
    <property type="match status" value="1"/>
</dbReference>
<dbReference type="InterPro" id="IPR001872">
    <property type="entry name" value="Peptidase_A8"/>
</dbReference>
<dbReference type="NCBIfam" id="TIGR00077">
    <property type="entry name" value="lspA"/>
    <property type="match status" value="1"/>
</dbReference>
<dbReference type="PANTHER" id="PTHR33695">
    <property type="entry name" value="LIPOPROTEIN SIGNAL PEPTIDASE"/>
    <property type="match status" value="1"/>
</dbReference>
<dbReference type="PANTHER" id="PTHR33695:SF1">
    <property type="entry name" value="LIPOPROTEIN SIGNAL PEPTIDASE"/>
    <property type="match status" value="1"/>
</dbReference>
<dbReference type="Pfam" id="PF01252">
    <property type="entry name" value="Peptidase_A8"/>
    <property type="match status" value="1"/>
</dbReference>
<dbReference type="PRINTS" id="PR00781">
    <property type="entry name" value="LIPOSIGPTASE"/>
</dbReference>
<dbReference type="PROSITE" id="PS00855">
    <property type="entry name" value="SPASE_II"/>
    <property type="match status" value="1"/>
</dbReference>
<organism>
    <name type="scientific">Staphylococcus aureus (strain JH1)</name>
    <dbReference type="NCBI Taxonomy" id="359787"/>
    <lineage>
        <taxon>Bacteria</taxon>
        <taxon>Bacillati</taxon>
        <taxon>Bacillota</taxon>
        <taxon>Bacilli</taxon>
        <taxon>Bacillales</taxon>
        <taxon>Staphylococcaceae</taxon>
        <taxon>Staphylococcus</taxon>
    </lineage>
</organism>
<evidence type="ECO:0000255" key="1">
    <source>
        <dbReference type="HAMAP-Rule" id="MF_00161"/>
    </source>
</evidence>
<sequence>MHKKYFIGTSILIAVFVVIFDQVTKYIIATTMKIGDSFEVIPHFLNITSHRNNGAAWGILSGKMTFFFIITIIILIALVYFFIKDAQYNLFMQVAISLLFAGALGNFIDRILTGEVVDFIDTNIFGYDFPIFNIADSSLTIGVILIIIALLKDTSNKKEKEVK</sequence>
<feature type="chain" id="PRO_1000076934" description="Lipoprotein signal peptidase">
    <location>
        <begin position="1"/>
        <end position="163"/>
    </location>
</feature>
<feature type="transmembrane region" description="Helical" evidence="1">
    <location>
        <begin position="11"/>
        <end position="31"/>
    </location>
</feature>
<feature type="transmembrane region" description="Helical" evidence="1">
    <location>
        <begin position="63"/>
        <end position="83"/>
    </location>
</feature>
<feature type="transmembrane region" description="Helical" evidence="1">
    <location>
        <begin position="88"/>
        <end position="108"/>
    </location>
</feature>
<feature type="transmembrane region" description="Helical" evidence="1">
    <location>
        <begin position="131"/>
        <end position="151"/>
    </location>
</feature>
<feature type="active site" evidence="1">
    <location>
        <position position="118"/>
    </location>
</feature>
<feature type="active site" evidence="1">
    <location>
        <position position="136"/>
    </location>
</feature>
<reference key="1">
    <citation type="submission" date="2007-06" db="EMBL/GenBank/DDBJ databases">
        <title>Complete sequence of chromosome of Staphylococcus aureus subsp. aureus JH1.</title>
        <authorList>
            <consortium name="US DOE Joint Genome Institute"/>
            <person name="Copeland A."/>
            <person name="Lucas S."/>
            <person name="Lapidus A."/>
            <person name="Barry K."/>
            <person name="Detter J.C."/>
            <person name="Glavina del Rio T."/>
            <person name="Hammon N."/>
            <person name="Israni S."/>
            <person name="Dalin E."/>
            <person name="Tice H."/>
            <person name="Pitluck S."/>
            <person name="Chain P."/>
            <person name="Malfatti S."/>
            <person name="Shin M."/>
            <person name="Vergez L."/>
            <person name="Schmutz J."/>
            <person name="Larimer F."/>
            <person name="Land M."/>
            <person name="Hauser L."/>
            <person name="Kyrpides N."/>
            <person name="Ivanova N."/>
            <person name="Tomasz A."/>
            <person name="Richardson P."/>
        </authorList>
    </citation>
    <scope>NUCLEOTIDE SEQUENCE [LARGE SCALE GENOMIC DNA]</scope>
    <source>
        <strain>JH1</strain>
    </source>
</reference>
<protein>
    <recommendedName>
        <fullName evidence="1">Lipoprotein signal peptidase</fullName>
        <ecNumber evidence="1">3.4.23.36</ecNumber>
    </recommendedName>
    <alternativeName>
        <fullName evidence="1">Prolipoprotein signal peptidase</fullName>
    </alternativeName>
    <alternativeName>
        <fullName evidence="1">Signal peptidase II</fullName>
        <shortName evidence="1">SPase II</shortName>
    </alternativeName>
</protein>
<keyword id="KW-0064">Aspartyl protease</keyword>
<keyword id="KW-1003">Cell membrane</keyword>
<keyword id="KW-0378">Hydrolase</keyword>
<keyword id="KW-0472">Membrane</keyword>
<keyword id="KW-0645">Protease</keyword>
<keyword id="KW-0812">Transmembrane</keyword>
<keyword id="KW-1133">Transmembrane helix</keyword>
<accession>A6U115</accession>
<comment type="function">
    <text evidence="1">This protein specifically catalyzes the removal of signal peptides from prolipoproteins.</text>
</comment>
<comment type="catalytic activity">
    <reaction evidence="1">
        <text>Release of signal peptides from bacterial membrane prolipoproteins. Hydrolyzes -Xaa-Yaa-Zaa-|-(S,diacylglyceryl)Cys-, in which Xaa is hydrophobic (preferably Leu), and Yaa (Ala or Ser) and Zaa (Gly or Ala) have small, neutral side chains.</text>
        <dbReference type="EC" id="3.4.23.36"/>
    </reaction>
</comment>
<comment type="pathway">
    <text evidence="1">Protein modification; lipoprotein biosynthesis (signal peptide cleavage).</text>
</comment>
<comment type="subcellular location">
    <subcellularLocation>
        <location evidence="1">Cell membrane</location>
        <topology evidence="1">Multi-pass membrane protein</topology>
    </subcellularLocation>
</comment>
<comment type="similarity">
    <text evidence="1">Belongs to the peptidase A8 family.</text>
</comment>